<gene>
    <name evidence="1" type="primary">rpmG</name>
    <name type="ordered locus">Mlut_19180</name>
</gene>
<feature type="chain" id="PRO_1000204912" description="Large ribosomal subunit protein bL33">
    <location>
        <begin position="1"/>
        <end position="55"/>
    </location>
</feature>
<sequence>MAKDKDVRPIIKLKSTAGTGFTYVTRKNRRNNPDRITLKKYDPVVRKHVDFREER</sequence>
<evidence type="ECO:0000255" key="1">
    <source>
        <dbReference type="HAMAP-Rule" id="MF_00294"/>
    </source>
</evidence>
<evidence type="ECO:0000305" key="2"/>
<reference key="1">
    <citation type="journal article" date="2010" name="J. Bacteriol.">
        <title>Genome sequence of the Fleming strain of Micrococcus luteus, a simple free-living actinobacterium.</title>
        <authorList>
            <person name="Young M."/>
            <person name="Artsatbanov V."/>
            <person name="Beller H.R."/>
            <person name="Chandra G."/>
            <person name="Chater K.F."/>
            <person name="Dover L.G."/>
            <person name="Goh E.B."/>
            <person name="Kahan T."/>
            <person name="Kaprelyants A.S."/>
            <person name="Kyrpides N."/>
            <person name="Lapidus A."/>
            <person name="Lowry S.R."/>
            <person name="Lykidis A."/>
            <person name="Mahillon J."/>
            <person name="Markowitz V."/>
            <person name="Mavromatis K."/>
            <person name="Mukamolova G.V."/>
            <person name="Oren A."/>
            <person name="Rokem J.S."/>
            <person name="Smith M.C."/>
            <person name="Young D.I."/>
            <person name="Greenblatt C.L."/>
        </authorList>
    </citation>
    <scope>NUCLEOTIDE SEQUENCE [LARGE SCALE GENOMIC DNA]</scope>
    <source>
        <strain>ATCC 4698 / DSM 20030 / JCM 1464 / CCM 169 / CCUG 5858 / IAM 1056 / NBRC 3333 / NCIMB 9278 / NCTC 2665 / VKM Ac-2230</strain>
    </source>
</reference>
<organism>
    <name type="scientific">Micrococcus luteus (strain ATCC 4698 / DSM 20030 / JCM 1464 / CCM 169 / CCUG 5858 / IAM 1056 / NBRC 3333 / NCIMB 9278 / NCTC 2665 / VKM Ac-2230)</name>
    <name type="common">Micrococcus lysodeikticus</name>
    <dbReference type="NCBI Taxonomy" id="465515"/>
    <lineage>
        <taxon>Bacteria</taxon>
        <taxon>Bacillati</taxon>
        <taxon>Actinomycetota</taxon>
        <taxon>Actinomycetes</taxon>
        <taxon>Micrococcales</taxon>
        <taxon>Micrococcaceae</taxon>
        <taxon>Micrococcus</taxon>
    </lineage>
</organism>
<dbReference type="EMBL" id="CP001628">
    <property type="protein sequence ID" value="ACS31400.1"/>
    <property type="molecule type" value="Genomic_DNA"/>
</dbReference>
<dbReference type="RefSeq" id="WP_002858336.1">
    <property type="nucleotide sequence ID" value="NZ_WBMF01000029.1"/>
</dbReference>
<dbReference type="SMR" id="C5C6R2"/>
<dbReference type="STRING" id="465515.Mlut_19180"/>
<dbReference type="EnsemblBacteria" id="ACS31400">
    <property type="protein sequence ID" value="ACS31400"/>
    <property type="gene ID" value="Mlut_19180"/>
</dbReference>
<dbReference type="GeneID" id="93364090"/>
<dbReference type="KEGG" id="mlu:Mlut_19180"/>
<dbReference type="eggNOG" id="COG0267">
    <property type="taxonomic scope" value="Bacteria"/>
</dbReference>
<dbReference type="HOGENOM" id="CLU_190949_1_1_11"/>
<dbReference type="Proteomes" id="UP000000738">
    <property type="component" value="Chromosome"/>
</dbReference>
<dbReference type="GO" id="GO:0022625">
    <property type="term" value="C:cytosolic large ribosomal subunit"/>
    <property type="evidence" value="ECO:0007669"/>
    <property type="project" value="TreeGrafter"/>
</dbReference>
<dbReference type="GO" id="GO:0003735">
    <property type="term" value="F:structural constituent of ribosome"/>
    <property type="evidence" value="ECO:0007669"/>
    <property type="project" value="InterPro"/>
</dbReference>
<dbReference type="GO" id="GO:0006412">
    <property type="term" value="P:translation"/>
    <property type="evidence" value="ECO:0007669"/>
    <property type="project" value="UniProtKB-UniRule"/>
</dbReference>
<dbReference type="FunFam" id="2.20.28.120:FF:000002">
    <property type="entry name" value="50S ribosomal protein L33"/>
    <property type="match status" value="1"/>
</dbReference>
<dbReference type="Gene3D" id="2.20.28.120">
    <property type="entry name" value="Ribosomal protein L33"/>
    <property type="match status" value="1"/>
</dbReference>
<dbReference type="HAMAP" id="MF_00294">
    <property type="entry name" value="Ribosomal_bL33"/>
    <property type="match status" value="1"/>
</dbReference>
<dbReference type="InterPro" id="IPR001705">
    <property type="entry name" value="Ribosomal_bL33"/>
</dbReference>
<dbReference type="InterPro" id="IPR018264">
    <property type="entry name" value="Ribosomal_bL33_CS"/>
</dbReference>
<dbReference type="InterPro" id="IPR038584">
    <property type="entry name" value="Ribosomal_bL33_sf"/>
</dbReference>
<dbReference type="InterPro" id="IPR011332">
    <property type="entry name" value="Ribosomal_zn-bd"/>
</dbReference>
<dbReference type="NCBIfam" id="NF001860">
    <property type="entry name" value="PRK00595.1"/>
    <property type="match status" value="1"/>
</dbReference>
<dbReference type="NCBIfam" id="TIGR01023">
    <property type="entry name" value="rpmG_bact"/>
    <property type="match status" value="1"/>
</dbReference>
<dbReference type="PANTHER" id="PTHR15238">
    <property type="entry name" value="54S RIBOSOMAL PROTEIN L39, MITOCHONDRIAL"/>
    <property type="match status" value="1"/>
</dbReference>
<dbReference type="PANTHER" id="PTHR15238:SF1">
    <property type="entry name" value="LARGE RIBOSOMAL SUBUNIT PROTEIN BL33M"/>
    <property type="match status" value="1"/>
</dbReference>
<dbReference type="Pfam" id="PF00471">
    <property type="entry name" value="Ribosomal_L33"/>
    <property type="match status" value="1"/>
</dbReference>
<dbReference type="SUPFAM" id="SSF57829">
    <property type="entry name" value="Zn-binding ribosomal proteins"/>
    <property type="match status" value="1"/>
</dbReference>
<dbReference type="PROSITE" id="PS00582">
    <property type="entry name" value="RIBOSOMAL_L33"/>
    <property type="match status" value="1"/>
</dbReference>
<comment type="similarity">
    <text evidence="1">Belongs to the bacterial ribosomal protein bL33 family.</text>
</comment>
<protein>
    <recommendedName>
        <fullName evidence="1">Large ribosomal subunit protein bL33</fullName>
    </recommendedName>
    <alternativeName>
        <fullName evidence="2">50S ribosomal protein L33</fullName>
    </alternativeName>
</protein>
<proteinExistence type="inferred from homology"/>
<name>RL33_MICLC</name>
<accession>C5C6R2</accession>
<keyword id="KW-1185">Reference proteome</keyword>
<keyword id="KW-0687">Ribonucleoprotein</keyword>
<keyword id="KW-0689">Ribosomal protein</keyword>